<accession>B8ZSC4</accession>
<protein>
    <recommendedName>
        <fullName evidence="2">Small ribosomal subunit protein uS12</fullName>
    </recommendedName>
    <alternativeName>
        <fullName evidence="4">30S ribosomal protein S12</fullName>
    </alternativeName>
</protein>
<name>RS12_MYCLB</name>
<evidence type="ECO:0000250" key="1"/>
<evidence type="ECO:0000255" key="2">
    <source>
        <dbReference type="HAMAP-Rule" id="MF_00403"/>
    </source>
</evidence>
<evidence type="ECO:0000256" key="3">
    <source>
        <dbReference type="SAM" id="MobiDB-lite"/>
    </source>
</evidence>
<evidence type="ECO:0000305" key="4"/>
<sequence>MPTIQQLVRKGRRDKIGKVKTAALKGNPQRRGVCTRVYTSTPKKPNSALRKVARVKLTSQVEVTAYIPGEGHNLQEHSMVLVRGGRVKDLPGVRYKIIRGSLDTQGVKNRKQARSRYGAKKEKS</sequence>
<comment type="function">
    <text evidence="2">With S4 and S5 plays an important role in translational accuracy.</text>
</comment>
<comment type="function">
    <text evidence="2">Interacts with and stabilizes bases of the 16S rRNA that are involved in tRNA selection in the A site and with the mRNA backbone. Located at the interface of the 30S and 50S subunits, it traverses the body of the 30S subunit contacting proteins on the other side and probably holding the rRNA structure together. The combined cluster of proteins S8, S12 and S17 appears to hold together the shoulder and platform of the 30S subunit.</text>
</comment>
<comment type="subunit">
    <text evidence="2">Part of the 30S ribosomal subunit. Contacts proteins S8 and S17. May interact with IF1 in the 30S initiation complex.</text>
</comment>
<comment type="similarity">
    <text evidence="2">Belongs to the universal ribosomal protein uS12 family.</text>
</comment>
<organism>
    <name type="scientific">Mycobacterium leprae (strain Br4923)</name>
    <dbReference type="NCBI Taxonomy" id="561304"/>
    <lineage>
        <taxon>Bacteria</taxon>
        <taxon>Bacillati</taxon>
        <taxon>Actinomycetota</taxon>
        <taxon>Actinomycetes</taxon>
        <taxon>Mycobacteriales</taxon>
        <taxon>Mycobacteriaceae</taxon>
        <taxon>Mycobacterium</taxon>
    </lineage>
</organism>
<reference key="1">
    <citation type="journal article" date="2009" name="Nat. Genet.">
        <title>Comparative genomic and phylogeographic analysis of Mycobacterium leprae.</title>
        <authorList>
            <person name="Monot M."/>
            <person name="Honore N."/>
            <person name="Garnier T."/>
            <person name="Zidane N."/>
            <person name="Sherafi D."/>
            <person name="Paniz-Mondolfi A."/>
            <person name="Matsuoka M."/>
            <person name="Taylor G.M."/>
            <person name="Donoghue H.D."/>
            <person name="Bouwman A."/>
            <person name="Mays S."/>
            <person name="Watson C."/>
            <person name="Lockwood D."/>
            <person name="Khamispour A."/>
            <person name="Dowlati Y."/>
            <person name="Jianping S."/>
            <person name="Rea T.H."/>
            <person name="Vera-Cabrera L."/>
            <person name="Stefani M.M."/>
            <person name="Banu S."/>
            <person name="Macdonald M."/>
            <person name="Sapkota B.R."/>
            <person name="Spencer J.S."/>
            <person name="Thomas J."/>
            <person name="Harshman K."/>
            <person name="Singh P."/>
            <person name="Busso P."/>
            <person name="Gattiker A."/>
            <person name="Rougemont J."/>
            <person name="Brennan P.J."/>
            <person name="Cole S.T."/>
        </authorList>
    </citation>
    <scope>NUCLEOTIDE SEQUENCE [LARGE SCALE GENOMIC DNA]</scope>
    <source>
        <strain>Br4923</strain>
    </source>
</reference>
<gene>
    <name evidence="2" type="primary">rpsL</name>
    <name type="ordered locus">MLBr01880</name>
</gene>
<proteinExistence type="inferred from homology"/>
<keyword id="KW-0488">Methylation</keyword>
<keyword id="KW-0687">Ribonucleoprotein</keyword>
<keyword id="KW-0689">Ribosomal protein</keyword>
<keyword id="KW-0694">RNA-binding</keyword>
<keyword id="KW-0699">rRNA-binding</keyword>
<keyword id="KW-0820">tRNA-binding</keyword>
<feature type="chain" id="PRO_1000134646" description="Small ribosomal subunit protein uS12">
    <location>
        <begin position="1"/>
        <end position="124"/>
    </location>
</feature>
<feature type="region of interest" description="Disordered" evidence="3">
    <location>
        <begin position="105"/>
        <end position="124"/>
    </location>
</feature>
<feature type="compositionally biased region" description="Basic residues" evidence="3">
    <location>
        <begin position="108"/>
        <end position="118"/>
    </location>
</feature>
<feature type="modified residue" description="3-methylthioaspartic acid" evidence="1">
    <location>
        <position position="89"/>
    </location>
</feature>
<dbReference type="EMBL" id="FM211192">
    <property type="protein sequence ID" value="CAR71976.1"/>
    <property type="molecule type" value="Genomic_DNA"/>
</dbReference>
<dbReference type="SMR" id="B8ZSC4"/>
<dbReference type="KEGG" id="mlb:MLBr01880"/>
<dbReference type="HOGENOM" id="CLU_104295_1_2_11"/>
<dbReference type="Proteomes" id="UP000006900">
    <property type="component" value="Chromosome"/>
</dbReference>
<dbReference type="GO" id="GO:0015935">
    <property type="term" value="C:small ribosomal subunit"/>
    <property type="evidence" value="ECO:0007669"/>
    <property type="project" value="InterPro"/>
</dbReference>
<dbReference type="GO" id="GO:0019843">
    <property type="term" value="F:rRNA binding"/>
    <property type="evidence" value="ECO:0007669"/>
    <property type="project" value="UniProtKB-UniRule"/>
</dbReference>
<dbReference type="GO" id="GO:0003735">
    <property type="term" value="F:structural constituent of ribosome"/>
    <property type="evidence" value="ECO:0007669"/>
    <property type="project" value="InterPro"/>
</dbReference>
<dbReference type="GO" id="GO:0000049">
    <property type="term" value="F:tRNA binding"/>
    <property type="evidence" value="ECO:0007669"/>
    <property type="project" value="UniProtKB-UniRule"/>
</dbReference>
<dbReference type="GO" id="GO:0006412">
    <property type="term" value="P:translation"/>
    <property type="evidence" value="ECO:0007669"/>
    <property type="project" value="UniProtKB-UniRule"/>
</dbReference>
<dbReference type="CDD" id="cd03368">
    <property type="entry name" value="Ribosomal_S12"/>
    <property type="match status" value="1"/>
</dbReference>
<dbReference type="FunFam" id="2.40.50.140:FF:000001">
    <property type="entry name" value="30S ribosomal protein S12"/>
    <property type="match status" value="1"/>
</dbReference>
<dbReference type="Gene3D" id="2.40.50.140">
    <property type="entry name" value="Nucleic acid-binding proteins"/>
    <property type="match status" value="1"/>
</dbReference>
<dbReference type="HAMAP" id="MF_00403_B">
    <property type="entry name" value="Ribosomal_uS12_B"/>
    <property type="match status" value="1"/>
</dbReference>
<dbReference type="InterPro" id="IPR012340">
    <property type="entry name" value="NA-bd_OB-fold"/>
</dbReference>
<dbReference type="InterPro" id="IPR006032">
    <property type="entry name" value="Ribosomal_uS12"/>
</dbReference>
<dbReference type="InterPro" id="IPR005679">
    <property type="entry name" value="Ribosomal_uS12_bac"/>
</dbReference>
<dbReference type="NCBIfam" id="TIGR00981">
    <property type="entry name" value="rpsL_bact"/>
    <property type="match status" value="1"/>
</dbReference>
<dbReference type="PANTHER" id="PTHR11652">
    <property type="entry name" value="30S RIBOSOMAL PROTEIN S12 FAMILY MEMBER"/>
    <property type="match status" value="1"/>
</dbReference>
<dbReference type="Pfam" id="PF00164">
    <property type="entry name" value="Ribosom_S12_S23"/>
    <property type="match status" value="1"/>
</dbReference>
<dbReference type="PIRSF" id="PIRSF002133">
    <property type="entry name" value="Ribosomal_S12/S23"/>
    <property type="match status" value="1"/>
</dbReference>
<dbReference type="PRINTS" id="PR01034">
    <property type="entry name" value="RIBOSOMALS12"/>
</dbReference>
<dbReference type="SUPFAM" id="SSF50249">
    <property type="entry name" value="Nucleic acid-binding proteins"/>
    <property type="match status" value="1"/>
</dbReference>
<dbReference type="PROSITE" id="PS00055">
    <property type="entry name" value="RIBOSOMAL_S12"/>
    <property type="match status" value="1"/>
</dbReference>